<feature type="chain" id="PRO_0000247874" description="tRNA-guanine(15) transglycosylase">
    <location>
        <begin position="1"/>
        <end position="490"/>
    </location>
</feature>
<feature type="active site" description="Nucleophile" evidence="1">
    <location>
        <position position="90"/>
    </location>
</feature>
<feature type="binding site" evidence="1">
    <location>
        <position position="125"/>
    </location>
    <ligand>
        <name>substrate</name>
    </ligand>
</feature>
<feature type="binding site" evidence="1">
    <location>
        <position position="193"/>
    </location>
    <ligand>
        <name>substrate</name>
    </ligand>
</feature>
<feature type="binding site" evidence="1">
    <location>
        <position position="276"/>
    </location>
    <ligand>
        <name>Zn(2+)</name>
        <dbReference type="ChEBI" id="CHEBI:29105"/>
    </ligand>
</feature>
<feature type="binding site" evidence="1">
    <location>
        <position position="278"/>
    </location>
    <ligand>
        <name>Zn(2+)</name>
        <dbReference type="ChEBI" id="CHEBI:29105"/>
    </ligand>
</feature>
<feature type="binding site" evidence="1">
    <location>
        <position position="281"/>
    </location>
    <ligand>
        <name>Zn(2+)</name>
        <dbReference type="ChEBI" id="CHEBI:29105"/>
    </ligand>
</feature>
<name>ATGT_METBF</name>
<accession>Q46DI6</accession>
<protein>
    <recommendedName>
        <fullName evidence="1">tRNA-guanine(15) transglycosylase</fullName>
        <ecNumber evidence="1">2.4.2.48</ecNumber>
    </recommendedName>
    <alternativeName>
        <fullName evidence="1">7-cyano-7-deazaguanine tRNA-ribosyltransferase</fullName>
    </alternativeName>
    <alternativeName>
        <fullName evidence="1">Archaeal tRNA-guanine transglycosylase</fullName>
    </alternativeName>
</protein>
<comment type="function">
    <text evidence="1">Exchanges the guanine residue with 7-cyano-7-deazaguanine (preQ0) at position 15 in the dihydrouridine loop (D-loop) of archaeal tRNAs.</text>
</comment>
<comment type="catalytic activity">
    <reaction evidence="1">
        <text>guanosine(15) in tRNA + 7-cyano-7-deazaguanine = 7-cyano-7-carbaguanosine(15) in tRNA + guanine</text>
        <dbReference type="Rhea" id="RHEA:43164"/>
        <dbReference type="Rhea" id="RHEA-COMP:10371"/>
        <dbReference type="Rhea" id="RHEA-COMP:10372"/>
        <dbReference type="ChEBI" id="CHEBI:16235"/>
        <dbReference type="ChEBI" id="CHEBI:45075"/>
        <dbReference type="ChEBI" id="CHEBI:74269"/>
        <dbReference type="ChEBI" id="CHEBI:82850"/>
        <dbReference type="EC" id="2.4.2.48"/>
    </reaction>
</comment>
<comment type="cofactor">
    <cofactor evidence="1">
        <name>Zn(2+)</name>
        <dbReference type="ChEBI" id="CHEBI:29105"/>
    </cofactor>
    <text evidence="1">Binds 1 zinc ion per subunit.</text>
</comment>
<comment type="pathway">
    <text evidence="1">tRNA modification; archaeosine-tRNA biosynthesis.</text>
</comment>
<comment type="similarity">
    <text evidence="1">Belongs to the archaeosine tRNA-ribosyltransferase family.</text>
</comment>
<keyword id="KW-0328">Glycosyltransferase</keyword>
<keyword id="KW-0479">Metal-binding</keyword>
<keyword id="KW-0808">Transferase</keyword>
<keyword id="KW-0819">tRNA processing</keyword>
<keyword id="KW-0862">Zinc</keyword>
<reference key="1">
    <citation type="journal article" date="2006" name="J. Bacteriol.">
        <title>The Methanosarcina barkeri genome: comparative analysis with Methanosarcina acetivorans and Methanosarcina mazei reveals extensive rearrangement within methanosarcinal genomes.</title>
        <authorList>
            <person name="Maeder D.L."/>
            <person name="Anderson I."/>
            <person name="Brettin T.S."/>
            <person name="Bruce D.C."/>
            <person name="Gilna P."/>
            <person name="Han C.S."/>
            <person name="Lapidus A."/>
            <person name="Metcalf W.W."/>
            <person name="Saunders E."/>
            <person name="Tapia R."/>
            <person name="Sowers K.R."/>
        </authorList>
    </citation>
    <scope>NUCLEOTIDE SEQUENCE [LARGE SCALE GENOMIC DNA]</scope>
    <source>
        <strain>Fusaro / DSM 804</strain>
    </source>
</reference>
<sequence length="490" mass="55093">MSAIFEILDKDAGGRIGRLRTPHGTVETPTVMPVINPNIQLIPPKEMRNFGAEILITNSYIIYRKEELKSVALEKGLHGLLGFDGPIMTDSGSFQLSVYGSVEVTNEEILGFQQKIGSDIIVPLDIPTPPDVHYRRAEEELAITAERLEAARKFIQSEQLLAGPVQGSTYPELREKAASHLKDLNFEVYPLGAVVPLMEAYRYAELVDVIAASKKGLSPASPVHLFGAGHPMMFALAVAMGCDLFDSAAYALYAKDGRYITVNGTYHVEKLNYLPCSCPVCSKYTAEELKKADNREELLGKHNLYATFAEIRLIKQCIKDGKLLELVEQRCRAHPKLLDGLKKLYTHSSWLEQLDPATKGTFFYCGPESSSRPEILRFGKRLDRFSLQGSVIIRTGSVKGEKDYDQILTFKAPFGAFPVEMEEVYPFNAEVPKFPDYESLNTALSNTLKLIDLNPEAEFTFICEEEFKHPLIEEIRKRAKLVYRKDWKKE</sequence>
<evidence type="ECO:0000255" key="1">
    <source>
        <dbReference type="HAMAP-Rule" id="MF_01634"/>
    </source>
</evidence>
<organism>
    <name type="scientific">Methanosarcina barkeri (strain Fusaro / DSM 804)</name>
    <dbReference type="NCBI Taxonomy" id="269797"/>
    <lineage>
        <taxon>Archaea</taxon>
        <taxon>Methanobacteriati</taxon>
        <taxon>Methanobacteriota</taxon>
        <taxon>Stenosarchaea group</taxon>
        <taxon>Methanomicrobia</taxon>
        <taxon>Methanosarcinales</taxon>
        <taxon>Methanosarcinaceae</taxon>
        <taxon>Methanosarcina</taxon>
    </lineage>
</organism>
<proteinExistence type="inferred from homology"/>
<dbReference type="EC" id="2.4.2.48" evidence="1"/>
<dbReference type="EMBL" id="CP000099">
    <property type="protein sequence ID" value="AAZ70056.1"/>
    <property type="molecule type" value="Genomic_DNA"/>
</dbReference>
<dbReference type="SMR" id="Q46DI6"/>
<dbReference type="STRING" id="269797.Mbar_A1088"/>
<dbReference type="PaxDb" id="269797-Mbar_A1088"/>
<dbReference type="KEGG" id="mba:Mbar_A1088"/>
<dbReference type="eggNOG" id="arCOG00989">
    <property type="taxonomic scope" value="Archaea"/>
</dbReference>
<dbReference type="HOGENOM" id="CLU_030083_0_0_2"/>
<dbReference type="OrthoDB" id="6871at2157"/>
<dbReference type="UniPathway" id="UPA00393"/>
<dbReference type="GO" id="GO:0005737">
    <property type="term" value="C:cytoplasm"/>
    <property type="evidence" value="ECO:0007669"/>
    <property type="project" value="TreeGrafter"/>
</dbReference>
<dbReference type="GO" id="GO:0016763">
    <property type="term" value="F:pentosyltransferase activity"/>
    <property type="evidence" value="ECO:0007669"/>
    <property type="project" value="UniProtKB-UniRule"/>
</dbReference>
<dbReference type="GO" id="GO:0008270">
    <property type="term" value="F:zinc ion binding"/>
    <property type="evidence" value="ECO:0007669"/>
    <property type="project" value="UniProtKB-UniRule"/>
</dbReference>
<dbReference type="GO" id="GO:0002099">
    <property type="term" value="P:tRNA wobble guanine modification"/>
    <property type="evidence" value="ECO:0007669"/>
    <property type="project" value="TreeGrafter"/>
</dbReference>
<dbReference type="Gene3D" id="3.20.20.105">
    <property type="entry name" value="Queuine tRNA-ribosyltransferase-like"/>
    <property type="match status" value="1"/>
</dbReference>
<dbReference type="HAMAP" id="MF_01634">
    <property type="entry name" value="TgtA_arch"/>
    <property type="match status" value="1"/>
</dbReference>
<dbReference type="InterPro" id="IPR050076">
    <property type="entry name" value="ArchSynthase1/Queuine_TRR"/>
</dbReference>
<dbReference type="InterPro" id="IPR036511">
    <property type="entry name" value="TGT-like_sf"/>
</dbReference>
<dbReference type="InterPro" id="IPR004804">
    <property type="entry name" value="TgtA"/>
</dbReference>
<dbReference type="InterPro" id="IPR002616">
    <property type="entry name" value="tRNA_ribo_trans-like"/>
</dbReference>
<dbReference type="NCBIfam" id="TIGR00432">
    <property type="entry name" value="arcsn_tRNA_tgt"/>
    <property type="match status" value="1"/>
</dbReference>
<dbReference type="NCBIfam" id="TIGR00449">
    <property type="entry name" value="tgt_general"/>
    <property type="match status" value="1"/>
</dbReference>
<dbReference type="PANTHER" id="PTHR46499">
    <property type="entry name" value="QUEUINE TRNA-RIBOSYLTRANSFERASE"/>
    <property type="match status" value="1"/>
</dbReference>
<dbReference type="PANTHER" id="PTHR46499:SF1">
    <property type="entry name" value="QUEUINE TRNA-RIBOSYLTRANSFERASE"/>
    <property type="match status" value="1"/>
</dbReference>
<dbReference type="Pfam" id="PF01702">
    <property type="entry name" value="TGT"/>
    <property type="match status" value="1"/>
</dbReference>
<dbReference type="SUPFAM" id="SSF88802">
    <property type="entry name" value="Pre-PUA domain"/>
    <property type="match status" value="1"/>
</dbReference>
<dbReference type="SUPFAM" id="SSF51713">
    <property type="entry name" value="tRNA-guanine transglycosylase"/>
    <property type="match status" value="1"/>
</dbReference>
<gene>
    <name evidence="1" type="primary">tgtA</name>
    <name type="ordered locus">Mbar_A1088</name>
</gene>